<comment type="function">
    <text evidence="1">Required for accurate and efficient protein synthesis under certain stress conditions. May act as a fidelity factor of the translation reaction, by catalyzing a one-codon backward translocation of tRNAs on improperly translocated ribosomes. Back-translocation proceeds from a post-translocation (POST) complex to a pre-translocation (PRE) complex, thus giving elongation factor G a second chance to translocate the tRNAs correctly. Binds to ribosomes in a GTP-dependent manner.</text>
</comment>
<comment type="catalytic activity">
    <reaction evidence="1">
        <text>GTP + H2O = GDP + phosphate + H(+)</text>
        <dbReference type="Rhea" id="RHEA:19669"/>
        <dbReference type="ChEBI" id="CHEBI:15377"/>
        <dbReference type="ChEBI" id="CHEBI:15378"/>
        <dbReference type="ChEBI" id="CHEBI:37565"/>
        <dbReference type="ChEBI" id="CHEBI:43474"/>
        <dbReference type="ChEBI" id="CHEBI:58189"/>
        <dbReference type="EC" id="3.6.5.n1"/>
    </reaction>
</comment>
<comment type="subcellular location">
    <subcellularLocation>
        <location evidence="1">Cell membrane</location>
        <topology evidence="1">Peripheral membrane protein</topology>
        <orientation evidence="1">Cytoplasmic side</orientation>
    </subcellularLocation>
</comment>
<comment type="similarity">
    <text evidence="1">Belongs to the TRAFAC class translation factor GTPase superfamily. Classic translation factor GTPase family. LepA subfamily.</text>
</comment>
<feature type="chain" id="PRO_1000057468" description="Elongation factor 4">
    <location>
        <begin position="1"/>
        <end position="602"/>
    </location>
</feature>
<feature type="domain" description="tr-type G">
    <location>
        <begin position="7"/>
        <end position="189"/>
    </location>
</feature>
<feature type="binding site" evidence="1">
    <location>
        <begin position="19"/>
        <end position="24"/>
    </location>
    <ligand>
        <name>GTP</name>
        <dbReference type="ChEBI" id="CHEBI:37565"/>
    </ligand>
</feature>
<feature type="binding site" evidence="1">
    <location>
        <begin position="136"/>
        <end position="139"/>
    </location>
    <ligand>
        <name>GTP</name>
        <dbReference type="ChEBI" id="CHEBI:37565"/>
    </ligand>
</feature>
<keyword id="KW-1003">Cell membrane</keyword>
<keyword id="KW-0342">GTP-binding</keyword>
<keyword id="KW-0378">Hydrolase</keyword>
<keyword id="KW-0472">Membrane</keyword>
<keyword id="KW-0547">Nucleotide-binding</keyword>
<keyword id="KW-0648">Protein biosynthesis</keyword>
<keyword id="KW-1185">Reference proteome</keyword>
<reference key="1">
    <citation type="journal article" date="2016" name="Genome Announc.">
        <title>Complete genome sequence of Alkaliphilus metalliredigens strain QYMF, an alkaliphilic and metal-reducing bacterium isolated from borax-contaminated leachate ponds.</title>
        <authorList>
            <person name="Hwang C."/>
            <person name="Copeland A."/>
            <person name="Lucas S."/>
            <person name="Lapidus A."/>
            <person name="Barry K."/>
            <person name="Detter J.C."/>
            <person name="Glavina Del Rio T."/>
            <person name="Hammon N."/>
            <person name="Israni S."/>
            <person name="Dalin E."/>
            <person name="Tice H."/>
            <person name="Pitluck S."/>
            <person name="Chertkov O."/>
            <person name="Brettin T."/>
            <person name="Bruce D."/>
            <person name="Han C."/>
            <person name="Schmutz J."/>
            <person name="Larimer F."/>
            <person name="Land M.L."/>
            <person name="Hauser L."/>
            <person name="Kyrpides N."/>
            <person name="Mikhailova N."/>
            <person name="Ye Q."/>
            <person name="Zhou J."/>
            <person name="Richardson P."/>
            <person name="Fields M.W."/>
        </authorList>
    </citation>
    <scope>NUCLEOTIDE SEQUENCE [LARGE SCALE GENOMIC DNA]</scope>
    <source>
        <strain>QYMF</strain>
    </source>
</reference>
<protein>
    <recommendedName>
        <fullName evidence="1">Elongation factor 4</fullName>
        <shortName evidence="1">EF-4</shortName>
        <ecNumber evidence="1">3.6.5.n1</ecNumber>
    </recommendedName>
    <alternativeName>
        <fullName evidence="1">Ribosomal back-translocase LepA</fullName>
    </alternativeName>
</protein>
<evidence type="ECO:0000255" key="1">
    <source>
        <dbReference type="HAMAP-Rule" id="MF_00071"/>
    </source>
</evidence>
<proteinExistence type="inferred from homology"/>
<gene>
    <name evidence="1" type="primary">lepA</name>
    <name type="ordered locus">Amet_3052</name>
</gene>
<sequence>MPSDRQRKIRNFSIIAHIDHGKSTLADRLIERTGLISQREMQAQVLDNMELERERGITIKLQSIRLIYKAKDGQDYYLNLIDTPGHVDFTYEVSRSLAACEGAILVVDAAQGIEAQTMANVYLALEQNLEIIPVINKIDLPSARPDEIKREIEDIIGLDASEAPLISAKDGLNIDDVLEAIVKNIPPPTEDEEAPLKALVFDSYYDNYKGVVAYTRVVEGTVKKGMKIRMMATKKEFEVTEVGVYSPGPIQLDQLSAGDVGYIAASIKDVRYCRVGDTITDALNPTEHSLPGYRKVTPMVYCGVYPAEGEKYEDVRDALDRLQVNDAALVFEAETSAALGFGFRCGFLGLLHMEIIQERLEREFNLDLVTTAPSVIYRVTKTNGEVVMIQNPANLPVTQEISVIEEPIVKATIMVPSEYAGIVIELCQDRRGEMKGMDYIEETRVNLHYELPLNEVIYDFFDALKSKTKGYGSLDYEMKGYKPSTLVKLDILINSEQVDALSFIVHESKAYARGKGMCEKLKDEIPRHQFPVPLQASIGTKIIARETIRALRKDVLAKCYGGDISRKKKLLEKQKKGKKRMRQVGSVEVPQKAFMSVLKLDT</sequence>
<organism>
    <name type="scientific">Alkaliphilus metalliredigens (strain QYMF)</name>
    <dbReference type="NCBI Taxonomy" id="293826"/>
    <lineage>
        <taxon>Bacteria</taxon>
        <taxon>Bacillati</taxon>
        <taxon>Bacillota</taxon>
        <taxon>Clostridia</taxon>
        <taxon>Peptostreptococcales</taxon>
        <taxon>Natronincolaceae</taxon>
        <taxon>Alkaliphilus</taxon>
    </lineage>
</organism>
<dbReference type="EC" id="3.6.5.n1" evidence="1"/>
<dbReference type="EMBL" id="CP000724">
    <property type="protein sequence ID" value="ABR49192.1"/>
    <property type="molecule type" value="Genomic_DNA"/>
</dbReference>
<dbReference type="RefSeq" id="WP_012064158.1">
    <property type="nucleotide sequence ID" value="NC_009633.1"/>
</dbReference>
<dbReference type="SMR" id="A6TSM4"/>
<dbReference type="STRING" id="293826.Amet_3052"/>
<dbReference type="KEGG" id="amt:Amet_3052"/>
<dbReference type="eggNOG" id="COG0481">
    <property type="taxonomic scope" value="Bacteria"/>
</dbReference>
<dbReference type="HOGENOM" id="CLU_009995_3_3_9"/>
<dbReference type="OrthoDB" id="9804431at2"/>
<dbReference type="Proteomes" id="UP000001572">
    <property type="component" value="Chromosome"/>
</dbReference>
<dbReference type="GO" id="GO:0005886">
    <property type="term" value="C:plasma membrane"/>
    <property type="evidence" value="ECO:0007669"/>
    <property type="project" value="UniProtKB-SubCell"/>
</dbReference>
<dbReference type="GO" id="GO:0005525">
    <property type="term" value="F:GTP binding"/>
    <property type="evidence" value="ECO:0007669"/>
    <property type="project" value="UniProtKB-UniRule"/>
</dbReference>
<dbReference type="GO" id="GO:0003924">
    <property type="term" value="F:GTPase activity"/>
    <property type="evidence" value="ECO:0007669"/>
    <property type="project" value="UniProtKB-UniRule"/>
</dbReference>
<dbReference type="GO" id="GO:0043022">
    <property type="term" value="F:ribosome binding"/>
    <property type="evidence" value="ECO:0007669"/>
    <property type="project" value="UniProtKB-UniRule"/>
</dbReference>
<dbReference type="GO" id="GO:0003746">
    <property type="term" value="F:translation elongation factor activity"/>
    <property type="evidence" value="ECO:0007669"/>
    <property type="project" value="UniProtKB-UniRule"/>
</dbReference>
<dbReference type="GO" id="GO:0045727">
    <property type="term" value="P:positive regulation of translation"/>
    <property type="evidence" value="ECO:0007669"/>
    <property type="project" value="UniProtKB-UniRule"/>
</dbReference>
<dbReference type="CDD" id="cd03699">
    <property type="entry name" value="EF4_II"/>
    <property type="match status" value="1"/>
</dbReference>
<dbReference type="CDD" id="cd16260">
    <property type="entry name" value="EF4_III"/>
    <property type="match status" value="1"/>
</dbReference>
<dbReference type="CDD" id="cd01890">
    <property type="entry name" value="LepA"/>
    <property type="match status" value="1"/>
</dbReference>
<dbReference type="CDD" id="cd03709">
    <property type="entry name" value="lepA_C"/>
    <property type="match status" value="1"/>
</dbReference>
<dbReference type="FunFam" id="3.40.50.300:FF:000078">
    <property type="entry name" value="Elongation factor 4"/>
    <property type="match status" value="1"/>
</dbReference>
<dbReference type="FunFam" id="2.40.30.10:FF:000015">
    <property type="entry name" value="Translation factor GUF1, mitochondrial"/>
    <property type="match status" value="1"/>
</dbReference>
<dbReference type="FunFam" id="3.30.70.240:FF:000007">
    <property type="entry name" value="Translation factor GUF1, mitochondrial"/>
    <property type="match status" value="1"/>
</dbReference>
<dbReference type="FunFam" id="3.30.70.2570:FF:000001">
    <property type="entry name" value="Translation factor GUF1, mitochondrial"/>
    <property type="match status" value="1"/>
</dbReference>
<dbReference type="FunFam" id="3.30.70.870:FF:000004">
    <property type="entry name" value="Translation factor GUF1, mitochondrial"/>
    <property type="match status" value="1"/>
</dbReference>
<dbReference type="Gene3D" id="3.30.70.240">
    <property type="match status" value="1"/>
</dbReference>
<dbReference type="Gene3D" id="3.30.70.2570">
    <property type="entry name" value="Elongation factor 4, C-terminal domain"/>
    <property type="match status" value="1"/>
</dbReference>
<dbReference type="Gene3D" id="3.30.70.870">
    <property type="entry name" value="Elongation Factor G (Translational Gtpase), domain 3"/>
    <property type="match status" value="1"/>
</dbReference>
<dbReference type="Gene3D" id="3.40.50.300">
    <property type="entry name" value="P-loop containing nucleotide triphosphate hydrolases"/>
    <property type="match status" value="1"/>
</dbReference>
<dbReference type="Gene3D" id="2.40.30.10">
    <property type="entry name" value="Translation factors"/>
    <property type="match status" value="1"/>
</dbReference>
<dbReference type="HAMAP" id="MF_00071">
    <property type="entry name" value="LepA"/>
    <property type="match status" value="1"/>
</dbReference>
<dbReference type="InterPro" id="IPR006297">
    <property type="entry name" value="EF-4"/>
</dbReference>
<dbReference type="InterPro" id="IPR035647">
    <property type="entry name" value="EFG_III/V"/>
</dbReference>
<dbReference type="InterPro" id="IPR000640">
    <property type="entry name" value="EFG_V-like"/>
</dbReference>
<dbReference type="InterPro" id="IPR004161">
    <property type="entry name" value="EFTu-like_2"/>
</dbReference>
<dbReference type="InterPro" id="IPR031157">
    <property type="entry name" value="G_TR_CS"/>
</dbReference>
<dbReference type="InterPro" id="IPR038363">
    <property type="entry name" value="LepA_C_sf"/>
</dbReference>
<dbReference type="InterPro" id="IPR013842">
    <property type="entry name" value="LepA_CTD"/>
</dbReference>
<dbReference type="InterPro" id="IPR035654">
    <property type="entry name" value="LepA_IV"/>
</dbReference>
<dbReference type="InterPro" id="IPR027417">
    <property type="entry name" value="P-loop_NTPase"/>
</dbReference>
<dbReference type="InterPro" id="IPR005225">
    <property type="entry name" value="Small_GTP-bd"/>
</dbReference>
<dbReference type="InterPro" id="IPR000795">
    <property type="entry name" value="T_Tr_GTP-bd_dom"/>
</dbReference>
<dbReference type="InterPro" id="IPR009000">
    <property type="entry name" value="Transl_B-barrel_sf"/>
</dbReference>
<dbReference type="NCBIfam" id="TIGR01393">
    <property type="entry name" value="lepA"/>
    <property type="match status" value="1"/>
</dbReference>
<dbReference type="NCBIfam" id="TIGR00231">
    <property type="entry name" value="small_GTP"/>
    <property type="match status" value="1"/>
</dbReference>
<dbReference type="PANTHER" id="PTHR43512:SF4">
    <property type="entry name" value="TRANSLATION FACTOR GUF1 HOMOLOG, CHLOROPLASTIC"/>
    <property type="match status" value="1"/>
</dbReference>
<dbReference type="PANTHER" id="PTHR43512">
    <property type="entry name" value="TRANSLATION FACTOR GUF1-RELATED"/>
    <property type="match status" value="1"/>
</dbReference>
<dbReference type="Pfam" id="PF00679">
    <property type="entry name" value="EFG_C"/>
    <property type="match status" value="1"/>
</dbReference>
<dbReference type="Pfam" id="PF00009">
    <property type="entry name" value="GTP_EFTU"/>
    <property type="match status" value="1"/>
</dbReference>
<dbReference type="Pfam" id="PF03144">
    <property type="entry name" value="GTP_EFTU_D2"/>
    <property type="match status" value="1"/>
</dbReference>
<dbReference type="Pfam" id="PF06421">
    <property type="entry name" value="LepA_C"/>
    <property type="match status" value="1"/>
</dbReference>
<dbReference type="PRINTS" id="PR00315">
    <property type="entry name" value="ELONGATNFCT"/>
</dbReference>
<dbReference type="SMART" id="SM00838">
    <property type="entry name" value="EFG_C"/>
    <property type="match status" value="1"/>
</dbReference>
<dbReference type="SUPFAM" id="SSF54980">
    <property type="entry name" value="EF-G C-terminal domain-like"/>
    <property type="match status" value="2"/>
</dbReference>
<dbReference type="SUPFAM" id="SSF52540">
    <property type="entry name" value="P-loop containing nucleoside triphosphate hydrolases"/>
    <property type="match status" value="1"/>
</dbReference>
<dbReference type="SUPFAM" id="SSF50447">
    <property type="entry name" value="Translation proteins"/>
    <property type="match status" value="1"/>
</dbReference>
<dbReference type="PROSITE" id="PS00301">
    <property type="entry name" value="G_TR_1"/>
    <property type="match status" value="1"/>
</dbReference>
<dbReference type="PROSITE" id="PS51722">
    <property type="entry name" value="G_TR_2"/>
    <property type="match status" value="1"/>
</dbReference>
<name>LEPA_ALKMQ</name>
<accession>A6TSM4</accession>